<proteinExistence type="inferred from homology"/>
<name>PYRG_SHESR</name>
<evidence type="ECO:0000255" key="1">
    <source>
        <dbReference type="HAMAP-Rule" id="MF_01227"/>
    </source>
</evidence>
<organism>
    <name type="scientific">Shewanella sp. (strain MR-7)</name>
    <dbReference type="NCBI Taxonomy" id="60481"/>
    <lineage>
        <taxon>Bacteria</taxon>
        <taxon>Pseudomonadati</taxon>
        <taxon>Pseudomonadota</taxon>
        <taxon>Gammaproteobacteria</taxon>
        <taxon>Alteromonadales</taxon>
        <taxon>Shewanellaceae</taxon>
        <taxon>Shewanella</taxon>
    </lineage>
</organism>
<dbReference type="EC" id="6.3.4.2" evidence="1"/>
<dbReference type="EMBL" id="CP000444">
    <property type="protein sequence ID" value="ABI42184.1"/>
    <property type="molecule type" value="Genomic_DNA"/>
</dbReference>
<dbReference type="SMR" id="Q0HXH1"/>
<dbReference type="KEGG" id="shm:Shewmr7_1185"/>
<dbReference type="HOGENOM" id="CLU_011675_5_0_6"/>
<dbReference type="UniPathway" id="UPA00159">
    <property type="reaction ID" value="UER00277"/>
</dbReference>
<dbReference type="GO" id="GO:0005829">
    <property type="term" value="C:cytosol"/>
    <property type="evidence" value="ECO:0007669"/>
    <property type="project" value="TreeGrafter"/>
</dbReference>
<dbReference type="GO" id="GO:0005524">
    <property type="term" value="F:ATP binding"/>
    <property type="evidence" value="ECO:0007669"/>
    <property type="project" value="UniProtKB-KW"/>
</dbReference>
<dbReference type="GO" id="GO:0003883">
    <property type="term" value="F:CTP synthase activity"/>
    <property type="evidence" value="ECO:0007669"/>
    <property type="project" value="UniProtKB-UniRule"/>
</dbReference>
<dbReference type="GO" id="GO:0004359">
    <property type="term" value="F:glutaminase activity"/>
    <property type="evidence" value="ECO:0007669"/>
    <property type="project" value="RHEA"/>
</dbReference>
<dbReference type="GO" id="GO:0042802">
    <property type="term" value="F:identical protein binding"/>
    <property type="evidence" value="ECO:0007669"/>
    <property type="project" value="TreeGrafter"/>
</dbReference>
<dbReference type="GO" id="GO:0046872">
    <property type="term" value="F:metal ion binding"/>
    <property type="evidence" value="ECO:0007669"/>
    <property type="project" value="UniProtKB-KW"/>
</dbReference>
<dbReference type="GO" id="GO:0044210">
    <property type="term" value="P:'de novo' CTP biosynthetic process"/>
    <property type="evidence" value="ECO:0007669"/>
    <property type="project" value="UniProtKB-UniRule"/>
</dbReference>
<dbReference type="GO" id="GO:0019856">
    <property type="term" value="P:pyrimidine nucleobase biosynthetic process"/>
    <property type="evidence" value="ECO:0007669"/>
    <property type="project" value="TreeGrafter"/>
</dbReference>
<dbReference type="CDD" id="cd03113">
    <property type="entry name" value="CTPS_N"/>
    <property type="match status" value="1"/>
</dbReference>
<dbReference type="CDD" id="cd01746">
    <property type="entry name" value="GATase1_CTP_Synthase"/>
    <property type="match status" value="1"/>
</dbReference>
<dbReference type="FunFam" id="3.40.50.300:FF:000009">
    <property type="entry name" value="CTP synthase"/>
    <property type="match status" value="1"/>
</dbReference>
<dbReference type="FunFam" id="3.40.50.880:FF:000002">
    <property type="entry name" value="CTP synthase"/>
    <property type="match status" value="1"/>
</dbReference>
<dbReference type="Gene3D" id="3.40.50.880">
    <property type="match status" value="1"/>
</dbReference>
<dbReference type="Gene3D" id="3.40.50.300">
    <property type="entry name" value="P-loop containing nucleotide triphosphate hydrolases"/>
    <property type="match status" value="1"/>
</dbReference>
<dbReference type="HAMAP" id="MF_01227">
    <property type="entry name" value="PyrG"/>
    <property type="match status" value="1"/>
</dbReference>
<dbReference type="InterPro" id="IPR029062">
    <property type="entry name" value="Class_I_gatase-like"/>
</dbReference>
<dbReference type="InterPro" id="IPR004468">
    <property type="entry name" value="CTP_synthase"/>
</dbReference>
<dbReference type="InterPro" id="IPR017456">
    <property type="entry name" value="CTP_synthase_N"/>
</dbReference>
<dbReference type="InterPro" id="IPR017926">
    <property type="entry name" value="GATASE"/>
</dbReference>
<dbReference type="InterPro" id="IPR033828">
    <property type="entry name" value="GATase1_CTP_Synthase"/>
</dbReference>
<dbReference type="InterPro" id="IPR027417">
    <property type="entry name" value="P-loop_NTPase"/>
</dbReference>
<dbReference type="NCBIfam" id="NF003792">
    <property type="entry name" value="PRK05380.1"/>
    <property type="match status" value="1"/>
</dbReference>
<dbReference type="NCBIfam" id="TIGR00337">
    <property type="entry name" value="PyrG"/>
    <property type="match status" value="1"/>
</dbReference>
<dbReference type="PANTHER" id="PTHR11550">
    <property type="entry name" value="CTP SYNTHASE"/>
    <property type="match status" value="1"/>
</dbReference>
<dbReference type="PANTHER" id="PTHR11550:SF0">
    <property type="entry name" value="CTP SYNTHASE-RELATED"/>
    <property type="match status" value="1"/>
</dbReference>
<dbReference type="Pfam" id="PF06418">
    <property type="entry name" value="CTP_synth_N"/>
    <property type="match status" value="1"/>
</dbReference>
<dbReference type="Pfam" id="PF00117">
    <property type="entry name" value="GATase"/>
    <property type="match status" value="1"/>
</dbReference>
<dbReference type="SUPFAM" id="SSF52317">
    <property type="entry name" value="Class I glutamine amidotransferase-like"/>
    <property type="match status" value="1"/>
</dbReference>
<dbReference type="SUPFAM" id="SSF52540">
    <property type="entry name" value="P-loop containing nucleoside triphosphate hydrolases"/>
    <property type="match status" value="1"/>
</dbReference>
<dbReference type="PROSITE" id="PS51273">
    <property type="entry name" value="GATASE_TYPE_1"/>
    <property type="match status" value="1"/>
</dbReference>
<keyword id="KW-0067">ATP-binding</keyword>
<keyword id="KW-0315">Glutamine amidotransferase</keyword>
<keyword id="KW-0436">Ligase</keyword>
<keyword id="KW-0460">Magnesium</keyword>
<keyword id="KW-0479">Metal-binding</keyword>
<keyword id="KW-0547">Nucleotide-binding</keyword>
<keyword id="KW-0665">Pyrimidine biosynthesis</keyword>
<feature type="chain" id="PRO_0000266216" description="CTP synthase">
    <location>
        <begin position="1"/>
        <end position="546"/>
    </location>
</feature>
<feature type="domain" description="Glutamine amidotransferase type-1" evidence="1">
    <location>
        <begin position="291"/>
        <end position="542"/>
    </location>
</feature>
<feature type="region of interest" description="Amidoligase domain" evidence="1">
    <location>
        <begin position="1"/>
        <end position="266"/>
    </location>
</feature>
<feature type="active site" description="Nucleophile; for glutamine hydrolysis" evidence="1">
    <location>
        <position position="379"/>
    </location>
</feature>
<feature type="active site" evidence="1">
    <location>
        <position position="515"/>
    </location>
</feature>
<feature type="active site" evidence="1">
    <location>
        <position position="517"/>
    </location>
</feature>
<feature type="binding site" evidence="1">
    <location>
        <position position="14"/>
    </location>
    <ligand>
        <name>CTP</name>
        <dbReference type="ChEBI" id="CHEBI:37563"/>
        <note>allosteric inhibitor</note>
    </ligand>
</feature>
<feature type="binding site" evidence="1">
    <location>
        <position position="14"/>
    </location>
    <ligand>
        <name>UTP</name>
        <dbReference type="ChEBI" id="CHEBI:46398"/>
    </ligand>
</feature>
<feature type="binding site" evidence="1">
    <location>
        <begin position="15"/>
        <end position="20"/>
    </location>
    <ligand>
        <name>ATP</name>
        <dbReference type="ChEBI" id="CHEBI:30616"/>
    </ligand>
</feature>
<feature type="binding site" evidence="1">
    <location>
        <position position="72"/>
    </location>
    <ligand>
        <name>ATP</name>
        <dbReference type="ChEBI" id="CHEBI:30616"/>
    </ligand>
</feature>
<feature type="binding site" evidence="1">
    <location>
        <position position="72"/>
    </location>
    <ligand>
        <name>Mg(2+)</name>
        <dbReference type="ChEBI" id="CHEBI:18420"/>
    </ligand>
</feature>
<feature type="binding site" evidence="1">
    <location>
        <position position="140"/>
    </location>
    <ligand>
        <name>Mg(2+)</name>
        <dbReference type="ChEBI" id="CHEBI:18420"/>
    </ligand>
</feature>
<feature type="binding site" evidence="1">
    <location>
        <begin position="147"/>
        <end position="149"/>
    </location>
    <ligand>
        <name>CTP</name>
        <dbReference type="ChEBI" id="CHEBI:37563"/>
        <note>allosteric inhibitor</note>
    </ligand>
</feature>
<feature type="binding site" evidence="1">
    <location>
        <begin position="187"/>
        <end position="192"/>
    </location>
    <ligand>
        <name>CTP</name>
        <dbReference type="ChEBI" id="CHEBI:37563"/>
        <note>allosteric inhibitor</note>
    </ligand>
</feature>
<feature type="binding site" evidence="1">
    <location>
        <begin position="187"/>
        <end position="192"/>
    </location>
    <ligand>
        <name>UTP</name>
        <dbReference type="ChEBI" id="CHEBI:46398"/>
    </ligand>
</feature>
<feature type="binding site" evidence="1">
    <location>
        <position position="223"/>
    </location>
    <ligand>
        <name>CTP</name>
        <dbReference type="ChEBI" id="CHEBI:37563"/>
        <note>allosteric inhibitor</note>
    </ligand>
</feature>
<feature type="binding site" evidence="1">
    <location>
        <position position="223"/>
    </location>
    <ligand>
        <name>UTP</name>
        <dbReference type="ChEBI" id="CHEBI:46398"/>
    </ligand>
</feature>
<feature type="binding site" evidence="1">
    <location>
        <begin position="239"/>
        <end position="241"/>
    </location>
    <ligand>
        <name>ATP</name>
        <dbReference type="ChEBI" id="CHEBI:30616"/>
    </ligand>
</feature>
<feature type="binding site" evidence="1">
    <location>
        <position position="352"/>
    </location>
    <ligand>
        <name>L-glutamine</name>
        <dbReference type="ChEBI" id="CHEBI:58359"/>
    </ligand>
</feature>
<feature type="binding site" evidence="1">
    <location>
        <begin position="380"/>
        <end position="383"/>
    </location>
    <ligand>
        <name>L-glutamine</name>
        <dbReference type="ChEBI" id="CHEBI:58359"/>
    </ligand>
</feature>
<feature type="binding site" evidence="1">
    <location>
        <position position="403"/>
    </location>
    <ligand>
        <name>L-glutamine</name>
        <dbReference type="ChEBI" id="CHEBI:58359"/>
    </ligand>
</feature>
<feature type="binding site" evidence="1">
    <location>
        <position position="470"/>
    </location>
    <ligand>
        <name>L-glutamine</name>
        <dbReference type="ChEBI" id="CHEBI:58359"/>
    </ligand>
</feature>
<comment type="function">
    <text evidence="1">Catalyzes the ATP-dependent amination of UTP to CTP with either L-glutamine or ammonia as the source of nitrogen. Regulates intracellular CTP levels through interactions with the four ribonucleotide triphosphates.</text>
</comment>
<comment type="catalytic activity">
    <reaction evidence="1">
        <text>UTP + L-glutamine + ATP + H2O = CTP + L-glutamate + ADP + phosphate + 2 H(+)</text>
        <dbReference type="Rhea" id="RHEA:26426"/>
        <dbReference type="ChEBI" id="CHEBI:15377"/>
        <dbReference type="ChEBI" id="CHEBI:15378"/>
        <dbReference type="ChEBI" id="CHEBI:29985"/>
        <dbReference type="ChEBI" id="CHEBI:30616"/>
        <dbReference type="ChEBI" id="CHEBI:37563"/>
        <dbReference type="ChEBI" id="CHEBI:43474"/>
        <dbReference type="ChEBI" id="CHEBI:46398"/>
        <dbReference type="ChEBI" id="CHEBI:58359"/>
        <dbReference type="ChEBI" id="CHEBI:456216"/>
        <dbReference type="EC" id="6.3.4.2"/>
    </reaction>
</comment>
<comment type="catalytic activity">
    <reaction evidence="1">
        <text>L-glutamine + H2O = L-glutamate + NH4(+)</text>
        <dbReference type="Rhea" id="RHEA:15889"/>
        <dbReference type="ChEBI" id="CHEBI:15377"/>
        <dbReference type="ChEBI" id="CHEBI:28938"/>
        <dbReference type="ChEBI" id="CHEBI:29985"/>
        <dbReference type="ChEBI" id="CHEBI:58359"/>
    </reaction>
</comment>
<comment type="catalytic activity">
    <reaction evidence="1">
        <text>UTP + NH4(+) + ATP = CTP + ADP + phosphate + 2 H(+)</text>
        <dbReference type="Rhea" id="RHEA:16597"/>
        <dbReference type="ChEBI" id="CHEBI:15378"/>
        <dbReference type="ChEBI" id="CHEBI:28938"/>
        <dbReference type="ChEBI" id="CHEBI:30616"/>
        <dbReference type="ChEBI" id="CHEBI:37563"/>
        <dbReference type="ChEBI" id="CHEBI:43474"/>
        <dbReference type="ChEBI" id="CHEBI:46398"/>
        <dbReference type="ChEBI" id="CHEBI:456216"/>
    </reaction>
</comment>
<comment type="activity regulation">
    <text evidence="1">Allosterically activated by GTP, when glutamine is the substrate; GTP has no effect on the reaction when ammonia is the substrate. The allosteric effector GTP functions by stabilizing the protein conformation that binds the tetrahedral intermediate(s) formed during glutamine hydrolysis. Inhibited by the product CTP, via allosteric rather than competitive inhibition.</text>
</comment>
<comment type="pathway">
    <text evidence="1">Pyrimidine metabolism; CTP biosynthesis via de novo pathway; CTP from UDP: step 2/2.</text>
</comment>
<comment type="subunit">
    <text evidence="1">Homotetramer.</text>
</comment>
<comment type="miscellaneous">
    <text evidence="1">CTPSs have evolved a hybrid strategy for distinguishing between UTP and CTP. The overlapping regions of the product feedback inhibitory and substrate sites recognize a common feature in both compounds, the triphosphate moiety. To differentiate isosteric substrate and product pyrimidine rings, an additional pocket far from the expected kinase/ligase catalytic site, specifically recognizes the cytosine and ribose portions of the product inhibitor.</text>
</comment>
<comment type="similarity">
    <text evidence="1">Belongs to the CTP synthase family.</text>
</comment>
<sequence length="546" mass="60234">MTTRYIFVTGGVVSSLGKGIAAASLAAILEARGLNVTIMKLDPYINVDPGTMSPTQHGEVFVTEDGAETDLDLGHYERFIRTKMNRRNNFTTGRIYEEVLRKERRGDYLGATIQVIPHITNAIKEKVIAGGEGHDVAIVEIGGTVGDIESLPFLESIRQLGVELGRDRTLFMHLTLVPFLGAAGEVKTKPTQHSVKELRSIGIAPDVLICRGDRAIPANERAKISLFCNVEERAVISLKDVDSIYKIPALLRSQGLDDLVVKRFGLECREADLSEWENVIYQEANPNGEVVIGMVGKYIELPDAYKSVNEALKHAGLKNRVSVTIKYIDSQTVEAKGDEVLQGLDGILVPGGFGERGVEGKIQAAKFARENNLPYFGICLGMQVALIEFARNVAGMADAHSTEFNKETPFPVVGLITEWVDEEGNVEQRHEASDLGGTMRLGAQLCHLLEGSKAAQAYKGNSCVERHRHRYEVNNKYRERLEQAGLVFSGLSSDRKLVEMIELKDHPWFVAGQFHPEFTSTPRDGHPLFEGFVAAASAHQKRDLKK</sequence>
<gene>
    <name evidence="1" type="primary">pyrG</name>
    <name type="ordered locus">Shewmr7_1185</name>
</gene>
<accession>Q0HXH1</accession>
<protein>
    <recommendedName>
        <fullName evidence="1">CTP synthase</fullName>
        <ecNumber evidence="1">6.3.4.2</ecNumber>
    </recommendedName>
    <alternativeName>
        <fullName evidence="1">Cytidine 5'-triphosphate synthase</fullName>
    </alternativeName>
    <alternativeName>
        <fullName evidence="1">Cytidine triphosphate synthetase</fullName>
        <shortName evidence="1">CTP synthetase</shortName>
        <shortName evidence="1">CTPS</shortName>
    </alternativeName>
    <alternativeName>
        <fullName evidence="1">UTP--ammonia ligase</fullName>
    </alternativeName>
</protein>
<reference key="1">
    <citation type="submission" date="2006-08" db="EMBL/GenBank/DDBJ databases">
        <title>Complete sequence of chromosome 1 of Shewanella sp. MR-7.</title>
        <authorList>
            <person name="Copeland A."/>
            <person name="Lucas S."/>
            <person name="Lapidus A."/>
            <person name="Barry K."/>
            <person name="Detter J.C."/>
            <person name="Glavina del Rio T."/>
            <person name="Hammon N."/>
            <person name="Israni S."/>
            <person name="Dalin E."/>
            <person name="Tice H."/>
            <person name="Pitluck S."/>
            <person name="Kiss H."/>
            <person name="Brettin T."/>
            <person name="Bruce D."/>
            <person name="Han C."/>
            <person name="Tapia R."/>
            <person name="Gilna P."/>
            <person name="Schmutz J."/>
            <person name="Larimer F."/>
            <person name="Land M."/>
            <person name="Hauser L."/>
            <person name="Kyrpides N."/>
            <person name="Mikhailova N."/>
            <person name="Nealson K."/>
            <person name="Konstantinidis K."/>
            <person name="Klappenbach J."/>
            <person name="Tiedje J."/>
            <person name="Richardson P."/>
        </authorList>
    </citation>
    <scope>NUCLEOTIDE SEQUENCE [LARGE SCALE GENOMIC DNA]</scope>
    <source>
        <strain>MR-7</strain>
    </source>
</reference>